<evidence type="ECO:0000255" key="1">
    <source>
        <dbReference type="HAMAP-Rule" id="MF_01680"/>
    </source>
</evidence>
<sequence length="219" mass="25340">MSIQVFCDFDGTITNNDNIMSIMEKFAPPEAEEVKNRILSQELSIQEGVSQLFQFIPTNLHDEIIQFLIETAEIRNGFHEFIQFVNKNNISFYVISGGMDFFVYPLLQGLIPKEQIYCNETDFSNEYITVNWPHPCDHHCQNHCGLCKSSLIRKLSNTNDFHIVIGDSITDLQAAKQADKVFARDFLITKCEENHISYTPFESFHDIQNELKHLLEVKL</sequence>
<gene>
    <name evidence="1" type="primary">mtnX</name>
    <name type="ordered locus">BCE_4104</name>
</gene>
<name>MTNX_BACC1</name>
<comment type="function">
    <text evidence="1">Dephosphorylates 2-hydroxy-3-keto-5-methylthiopentenyl-1-phosphate (HK-MTPenyl-1-P) yielding 1,2-dihydroxy-3-keto-5-methylthiopentene (DHK-MTPene).</text>
</comment>
<comment type="catalytic activity">
    <reaction evidence="1">
        <text>2-hydroxy-5-methylsulfanyl-3-oxopent-1-enyl phosphate + H2O = 1,2-dihydroxy-5-(methylsulfanyl)pent-1-en-3-one + phosphate</text>
        <dbReference type="Rhea" id="RHEA:14481"/>
        <dbReference type="ChEBI" id="CHEBI:15377"/>
        <dbReference type="ChEBI" id="CHEBI:43474"/>
        <dbReference type="ChEBI" id="CHEBI:49252"/>
        <dbReference type="ChEBI" id="CHEBI:59505"/>
        <dbReference type="EC" id="3.1.3.87"/>
    </reaction>
</comment>
<comment type="pathway">
    <text evidence="1">Amino-acid biosynthesis; L-methionine biosynthesis via salvage pathway; L-methionine from S-methyl-5-thio-alpha-D-ribose 1-phosphate: step 4/6.</text>
</comment>
<comment type="similarity">
    <text evidence="1">Belongs to the HAD-like hydrolase superfamily. MtnX family.</text>
</comment>
<dbReference type="EC" id="3.1.3.87" evidence="1"/>
<dbReference type="EMBL" id="AE017194">
    <property type="protein sequence ID" value="AAS43006.1"/>
    <property type="molecule type" value="Genomic_DNA"/>
</dbReference>
<dbReference type="SMR" id="Q731R1"/>
<dbReference type="KEGG" id="bca:BCE_4104"/>
<dbReference type="HOGENOM" id="CLU_058495_2_1_9"/>
<dbReference type="UniPathway" id="UPA00904">
    <property type="reaction ID" value="UER00877"/>
</dbReference>
<dbReference type="Proteomes" id="UP000002527">
    <property type="component" value="Chromosome"/>
</dbReference>
<dbReference type="GO" id="GO:0043716">
    <property type="term" value="F:2-hydroxy-3-keto-5-methylthiopentenyl-1-phosphate phosphatase activity"/>
    <property type="evidence" value="ECO:0007669"/>
    <property type="project" value="UniProtKB-UniRule"/>
</dbReference>
<dbReference type="GO" id="GO:0019509">
    <property type="term" value="P:L-methionine salvage from methylthioadenosine"/>
    <property type="evidence" value="ECO:0007669"/>
    <property type="project" value="UniProtKB-UniRule"/>
</dbReference>
<dbReference type="CDD" id="cd07524">
    <property type="entry name" value="HAD_Pase"/>
    <property type="match status" value="1"/>
</dbReference>
<dbReference type="Gene3D" id="3.90.1470.20">
    <property type="match status" value="1"/>
</dbReference>
<dbReference type="Gene3D" id="3.40.50.1000">
    <property type="entry name" value="HAD superfamily/HAD-like"/>
    <property type="match status" value="1"/>
</dbReference>
<dbReference type="HAMAP" id="MF_01680">
    <property type="entry name" value="Salvage_MtnX"/>
    <property type="match status" value="1"/>
</dbReference>
<dbReference type="InterPro" id="IPR050849">
    <property type="entry name" value="HAD-like_hydrolase_phosphatase"/>
</dbReference>
<dbReference type="InterPro" id="IPR036412">
    <property type="entry name" value="HAD-like_sf"/>
</dbReference>
<dbReference type="InterPro" id="IPR017718">
    <property type="entry name" value="HAD-SF_hydro_IB_MtnX"/>
</dbReference>
<dbReference type="InterPro" id="IPR006384">
    <property type="entry name" value="HAD_hydro_PyrdxlP_Pase-like"/>
</dbReference>
<dbReference type="InterPro" id="IPR023214">
    <property type="entry name" value="HAD_sf"/>
</dbReference>
<dbReference type="NCBIfam" id="TIGR01489">
    <property type="entry name" value="DKMTPPase-SF"/>
    <property type="match status" value="1"/>
</dbReference>
<dbReference type="NCBIfam" id="TIGR01488">
    <property type="entry name" value="HAD-SF-IB"/>
    <property type="match status" value="1"/>
</dbReference>
<dbReference type="NCBIfam" id="NF007103">
    <property type="entry name" value="PRK09552.1"/>
    <property type="match status" value="1"/>
</dbReference>
<dbReference type="NCBIfam" id="TIGR03333">
    <property type="entry name" value="salvage_mtnX"/>
    <property type="match status" value="1"/>
</dbReference>
<dbReference type="PANTHER" id="PTHR28181:SF2">
    <property type="entry name" value="PHOSPHORIC MONOESTER HYDROLASE"/>
    <property type="match status" value="1"/>
</dbReference>
<dbReference type="PANTHER" id="PTHR28181">
    <property type="entry name" value="UPF0655 PROTEIN YCR015C"/>
    <property type="match status" value="1"/>
</dbReference>
<dbReference type="Pfam" id="PF12710">
    <property type="entry name" value="HAD"/>
    <property type="match status" value="1"/>
</dbReference>
<dbReference type="SUPFAM" id="SSF56784">
    <property type="entry name" value="HAD-like"/>
    <property type="match status" value="1"/>
</dbReference>
<protein>
    <recommendedName>
        <fullName evidence="1">2-hydroxy-3-keto-5-methylthiopentenyl-1-phosphate phosphatase</fullName>
        <shortName evidence="1">HK-MTPenyl-1-P phosphatase</shortName>
        <ecNumber evidence="1">3.1.3.87</ecNumber>
    </recommendedName>
</protein>
<organism>
    <name type="scientific">Bacillus cereus (strain ATCC 10987 / NRS 248)</name>
    <dbReference type="NCBI Taxonomy" id="222523"/>
    <lineage>
        <taxon>Bacteria</taxon>
        <taxon>Bacillati</taxon>
        <taxon>Bacillota</taxon>
        <taxon>Bacilli</taxon>
        <taxon>Bacillales</taxon>
        <taxon>Bacillaceae</taxon>
        <taxon>Bacillus</taxon>
        <taxon>Bacillus cereus group</taxon>
    </lineage>
</organism>
<feature type="chain" id="PRO_0000357476" description="2-hydroxy-3-keto-5-methylthiopentenyl-1-phosphate phosphatase">
    <location>
        <begin position="1"/>
        <end position="219"/>
    </location>
</feature>
<reference key="1">
    <citation type="journal article" date="2004" name="Nucleic Acids Res.">
        <title>The genome sequence of Bacillus cereus ATCC 10987 reveals metabolic adaptations and a large plasmid related to Bacillus anthracis pXO1.</title>
        <authorList>
            <person name="Rasko D.A."/>
            <person name="Ravel J."/>
            <person name="Oekstad O.A."/>
            <person name="Helgason E."/>
            <person name="Cer R.Z."/>
            <person name="Jiang L."/>
            <person name="Shores K.A."/>
            <person name="Fouts D.E."/>
            <person name="Tourasse N.J."/>
            <person name="Angiuoli S.V."/>
            <person name="Kolonay J.F."/>
            <person name="Nelson W.C."/>
            <person name="Kolstoe A.-B."/>
            <person name="Fraser C.M."/>
            <person name="Read T.D."/>
        </authorList>
    </citation>
    <scope>NUCLEOTIDE SEQUENCE [LARGE SCALE GENOMIC DNA]</scope>
    <source>
        <strain>ATCC 10987 / NRS 248</strain>
    </source>
</reference>
<accession>Q731R1</accession>
<keyword id="KW-0028">Amino-acid biosynthesis</keyword>
<keyword id="KW-0378">Hydrolase</keyword>
<keyword id="KW-0486">Methionine biosynthesis</keyword>
<proteinExistence type="inferred from homology"/>